<gene>
    <name evidence="1" type="primary">murE</name>
    <name type="ordered locus">SACOL1023</name>
</gene>
<sequence length="493" mass="54105">MDASTLFKKVKVKRVLGSLEQQIDDITTDSRTAREGSIFVASVGYTVDSHKFCQNVADQGCKLVVVNKEQSLPANVTQVVVPDTLRVASILAHTLYDYPSHQLVTFGVTGTNGKTSIATMIHLIQRKLQKNSAYLGTNGFQINETKTKGANTTPETVSLTKKIKEAVDAGAESMTLEVSSHGLVLGRLRGVEFDVAIFSNLTQDHLDFHGTMEAYGHAKSLLFSQLGEDLSKEKYVVLNNDDSFSEYLRTVTPYEVFSYGIDEEAQFMAKNIQESLQGVSFDFVTPFGTYPVKSPYVGKFNISNIMAAMIAVWSKGTSLETIIKAVENLEPVEGRLEVLDPSLPIDLIIDYAHTADGMNKLIDAVQPFVKQKLIFLVGMAGERDLTKTPEMGRVACRADYVIFTPDNPANDDPKMLTAELAKGATHQNYIEFDDRAEGIKHAIDIAEPGDTVVLASKGREPYQIMPGHIKVPHRDDLIGLEAAYKKFGGGPVD</sequence>
<comment type="function">
    <text evidence="1">Catalyzes the addition of L-lysine to the nucleotide precursor UDP-N-acetylmuramoyl-L-alanyl-D-glutamate (UMAG) in the biosynthesis of bacterial cell-wall peptidoglycan.</text>
</comment>
<comment type="catalytic activity">
    <reaction evidence="1">
        <text>UDP-N-acetyl-alpha-D-muramoyl-L-alanyl-D-glutamate + L-lysine + ATP = UDP-N-acetyl-alpha-D-muramoyl-L-alanyl-gamma-D-glutamyl-L-lysine + ADP + phosphate + H(+)</text>
        <dbReference type="Rhea" id="RHEA:17969"/>
        <dbReference type="ChEBI" id="CHEBI:15378"/>
        <dbReference type="ChEBI" id="CHEBI:30616"/>
        <dbReference type="ChEBI" id="CHEBI:32551"/>
        <dbReference type="ChEBI" id="CHEBI:43474"/>
        <dbReference type="ChEBI" id="CHEBI:83900"/>
        <dbReference type="ChEBI" id="CHEBI:83903"/>
        <dbReference type="ChEBI" id="CHEBI:456216"/>
        <dbReference type="EC" id="6.3.2.7"/>
    </reaction>
</comment>
<comment type="pathway">
    <text evidence="1">Cell wall biogenesis; peptidoglycan biosynthesis.</text>
</comment>
<comment type="subcellular location">
    <subcellularLocation>
        <location evidence="1">Cytoplasm</location>
    </subcellularLocation>
</comment>
<comment type="PTM">
    <text evidence="1">Carboxylation is probably crucial for Mg(2+) binding and, consequently, for the gamma-phosphate positioning of ATP.</text>
</comment>
<comment type="similarity">
    <text evidence="1">Belongs to the MurCDEF family. MurE subfamily.</text>
</comment>
<dbReference type="EC" id="6.3.2.7" evidence="1"/>
<dbReference type="EMBL" id="Y14370">
    <property type="protein sequence ID" value="CAA74740.1"/>
    <property type="molecule type" value="Genomic_DNA"/>
</dbReference>
<dbReference type="EMBL" id="CP000046">
    <property type="protein sequence ID" value="AAW36489.1"/>
    <property type="molecule type" value="Genomic_DNA"/>
</dbReference>
<dbReference type="RefSeq" id="WP_000340118.1">
    <property type="nucleotide sequence ID" value="NZ_JBGOFO010000002.1"/>
</dbReference>
<dbReference type="SMR" id="O86491"/>
<dbReference type="KEGG" id="sac:SACOL1023"/>
<dbReference type="HOGENOM" id="CLU_022291_0_1_9"/>
<dbReference type="BioCyc" id="MetaCyc:MONOMER-12253"/>
<dbReference type="UniPathway" id="UPA00219"/>
<dbReference type="Proteomes" id="UP000000530">
    <property type="component" value="Chromosome"/>
</dbReference>
<dbReference type="GO" id="GO:0005737">
    <property type="term" value="C:cytoplasm"/>
    <property type="evidence" value="ECO:0007669"/>
    <property type="project" value="UniProtKB-SubCell"/>
</dbReference>
<dbReference type="GO" id="GO:0005524">
    <property type="term" value="F:ATP binding"/>
    <property type="evidence" value="ECO:0007669"/>
    <property type="project" value="UniProtKB-UniRule"/>
</dbReference>
<dbReference type="GO" id="GO:0000287">
    <property type="term" value="F:magnesium ion binding"/>
    <property type="evidence" value="ECO:0007669"/>
    <property type="project" value="UniProtKB-UniRule"/>
</dbReference>
<dbReference type="GO" id="GO:0047482">
    <property type="term" value="F:UDP-N-acetylmuramoyl-L-alanyl-D-glutamate-L-lysine ligase activity"/>
    <property type="evidence" value="ECO:0007669"/>
    <property type="project" value="UniProtKB-UniRule"/>
</dbReference>
<dbReference type="GO" id="GO:0051301">
    <property type="term" value="P:cell division"/>
    <property type="evidence" value="ECO:0007669"/>
    <property type="project" value="UniProtKB-KW"/>
</dbReference>
<dbReference type="GO" id="GO:0071555">
    <property type="term" value="P:cell wall organization"/>
    <property type="evidence" value="ECO:0007669"/>
    <property type="project" value="UniProtKB-KW"/>
</dbReference>
<dbReference type="GO" id="GO:0009252">
    <property type="term" value="P:peptidoglycan biosynthetic process"/>
    <property type="evidence" value="ECO:0007669"/>
    <property type="project" value="UniProtKB-UniRule"/>
</dbReference>
<dbReference type="GO" id="GO:0008360">
    <property type="term" value="P:regulation of cell shape"/>
    <property type="evidence" value="ECO:0007669"/>
    <property type="project" value="UniProtKB-KW"/>
</dbReference>
<dbReference type="Gene3D" id="3.90.190.20">
    <property type="entry name" value="Mur ligase, C-terminal domain"/>
    <property type="match status" value="1"/>
</dbReference>
<dbReference type="Gene3D" id="3.40.1190.10">
    <property type="entry name" value="Mur-like, catalytic domain"/>
    <property type="match status" value="1"/>
</dbReference>
<dbReference type="Gene3D" id="3.40.1390.10">
    <property type="entry name" value="MurE/MurF, N-terminal domain"/>
    <property type="match status" value="1"/>
</dbReference>
<dbReference type="HAMAP" id="MF_00208">
    <property type="entry name" value="MurE"/>
    <property type="match status" value="1"/>
</dbReference>
<dbReference type="InterPro" id="IPR036565">
    <property type="entry name" value="Mur-like_cat_sf"/>
</dbReference>
<dbReference type="InterPro" id="IPR004101">
    <property type="entry name" value="Mur_ligase_C"/>
</dbReference>
<dbReference type="InterPro" id="IPR036615">
    <property type="entry name" value="Mur_ligase_C_dom_sf"/>
</dbReference>
<dbReference type="InterPro" id="IPR013221">
    <property type="entry name" value="Mur_ligase_cen"/>
</dbReference>
<dbReference type="InterPro" id="IPR035911">
    <property type="entry name" value="MurE/MurF_N"/>
</dbReference>
<dbReference type="InterPro" id="IPR005761">
    <property type="entry name" value="UDP-N-AcMur-Glu-dNH2Pim_ligase"/>
</dbReference>
<dbReference type="NCBIfam" id="TIGR01085">
    <property type="entry name" value="murE"/>
    <property type="match status" value="1"/>
</dbReference>
<dbReference type="NCBIfam" id="NF001126">
    <property type="entry name" value="PRK00139.1-4"/>
    <property type="match status" value="1"/>
</dbReference>
<dbReference type="NCBIfam" id="NF010628">
    <property type="entry name" value="PRK14022.1"/>
    <property type="match status" value="1"/>
</dbReference>
<dbReference type="PANTHER" id="PTHR23135">
    <property type="entry name" value="MUR LIGASE FAMILY MEMBER"/>
    <property type="match status" value="1"/>
</dbReference>
<dbReference type="PANTHER" id="PTHR23135:SF4">
    <property type="entry name" value="UDP-N-ACETYLMURAMOYL-L-ALANYL-D-GLUTAMATE--2,6-DIAMINOPIMELATE LIGASE MURE HOMOLOG, CHLOROPLASTIC"/>
    <property type="match status" value="1"/>
</dbReference>
<dbReference type="Pfam" id="PF02875">
    <property type="entry name" value="Mur_ligase_C"/>
    <property type="match status" value="1"/>
</dbReference>
<dbReference type="Pfam" id="PF08245">
    <property type="entry name" value="Mur_ligase_M"/>
    <property type="match status" value="1"/>
</dbReference>
<dbReference type="SUPFAM" id="SSF53623">
    <property type="entry name" value="MurD-like peptide ligases, catalytic domain"/>
    <property type="match status" value="1"/>
</dbReference>
<dbReference type="SUPFAM" id="SSF53244">
    <property type="entry name" value="MurD-like peptide ligases, peptide-binding domain"/>
    <property type="match status" value="1"/>
</dbReference>
<dbReference type="SUPFAM" id="SSF63418">
    <property type="entry name" value="MurE/MurF N-terminal domain"/>
    <property type="match status" value="1"/>
</dbReference>
<feature type="chain" id="PRO_0000101940" description="UDP-N-acetylmuramoyl-L-alanyl-D-glutamate--L-lysine ligase">
    <location>
        <begin position="1"/>
        <end position="493"/>
    </location>
</feature>
<feature type="short sequence motif" description="L-lysine recognition motif">
    <location>
        <begin position="406"/>
        <end position="409"/>
    </location>
</feature>
<feature type="binding site" evidence="1">
    <location>
        <position position="30"/>
    </location>
    <ligand>
        <name>UDP-N-acetyl-alpha-D-muramoyl-L-alanyl-D-glutamate</name>
        <dbReference type="ChEBI" id="CHEBI:83900"/>
    </ligand>
</feature>
<feature type="binding site" evidence="1">
    <location>
        <begin position="110"/>
        <end position="116"/>
    </location>
    <ligand>
        <name>ATP</name>
        <dbReference type="ChEBI" id="CHEBI:30616"/>
    </ligand>
</feature>
<feature type="binding site" evidence="1">
    <location>
        <begin position="152"/>
        <end position="153"/>
    </location>
    <ligand>
        <name>UDP-N-acetyl-alpha-D-muramoyl-L-alanyl-D-glutamate</name>
        <dbReference type="ChEBI" id="CHEBI:83900"/>
    </ligand>
</feature>
<feature type="binding site" evidence="1">
    <location>
        <position position="179"/>
    </location>
    <ligand>
        <name>UDP-N-acetyl-alpha-D-muramoyl-L-alanyl-D-glutamate</name>
        <dbReference type="ChEBI" id="CHEBI:83900"/>
    </ligand>
</feature>
<feature type="binding site" evidence="1">
    <location>
        <position position="187"/>
    </location>
    <ligand>
        <name>UDP-N-acetyl-alpha-D-muramoyl-L-alanyl-D-glutamate</name>
        <dbReference type="ChEBI" id="CHEBI:83900"/>
    </ligand>
</feature>
<feature type="modified residue" description="N6-carboxylysine" evidence="1">
    <location>
        <position position="219"/>
    </location>
</feature>
<feature type="sequence conflict" description="In Ref. 1." evidence="2" ref="1">
    <original>DAST</original>
    <variation>QVRC</variation>
    <location>
        <begin position="2"/>
        <end position="5"/>
    </location>
</feature>
<feature type="sequence conflict" description="In Ref. 1." evidence="2" ref="1">
    <location>
        <position position="7"/>
    </location>
</feature>
<feature type="sequence conflict" description="In Ref. 1; CAA74740." evidence="2" ref="1">
    <original>G</original>
    <variation>S</variation>
    <location>
        <position position="190"/>
    </location>
</feature>
<evidence type="ECO:0000255" key="1">
    <source>
        <dbReference type="HAMAP-Rule" id="MF_00208"/>
    </source>
</evidence>
<evidence type="ECO:0000305" key="2"/>
<name>MURE_STAAC</name>
<keyword id="KW-0067">ATP-binding</keyword>
<keyword id="KW-0131">Cell cycle</keyword>
<keyword id="KW-0132">Cell division</keyword>
<keyword id="KW-0133">Cell shape</keyword>
<keyword id="KW-0961">Cell wall biogenesis/degradation</keyword>
<keyword id="KW-0963">Cytoplasm</keyword>
<keyword id="KW-0436">Ligase</keyword>
<keyword id="KW-0547">Nucleotide-binding</keyword>
<keyword id="KW-0573">Peptidoglycan synthesis</keyword>
<organism>
    <name type="scientific">Staphylococcus aureus (strain COL)</name>
    <dbReference type="NCBI Taxonomy" id="93062"/>
    <lineage>
        <taxon>Bacteria</taxon>
        <taxon>Bacillati</taxon>
        <taxon>Bacillota</taxon>
        <taxon>Bacilli</taxon>
        <taxon>Bacillales</taxon>
        <taxon>Staphylococcaceae</taxon>
        <taxon>Staphylococcus</taxon>
    </lineage>
</organism>
<proteinExistence type="inferred from homology"/>
<protein>
    <recommendedName>
        <fullName evidence="1">UDP-N-acetylmuramoyl-L-alanyl-D-glutamate--L-lysine ligase</fullName>
        <ecNumber evidence="1">6.3.2.7</ecNumber>
    </recommendedName>
    <alternativeName>
        <fullName evidence="1">L-lysine-adding enzyme</fullName>
    </alternativeName>
    <alternativeName>
        <fullName evidence="1">UDP-MurNAc-L-Ala-D-Glu:L-Lys ligase</fullName>
    </alternativeName>
    <alternativeName>
        <fullName evidence="1">UDP-MurNAc-tripeptide synthetase</fullName>
    </alternativeName>
    <alternativeName>
        <fullName evidence="1">UDP-N-acetylmuramyl-tripeptide synthetase</fullName>
    </alternativeName>
</protein>
<accession>O86491</accession>
<accession>Q5HH68</accession>
<reference key="1">
    <citation type="journal article" date="1998" name="Microb. Drug Resist.">
        <title>Molecular cloning and DNA sequencing of the Staphylococcus aureus UDP-N-acetylmuramyl tripeptide synthetase (murE) gene, essential for the optimal expression of methicillin resistance.</title>
        <authorList>
            <person name="Ludovice A.M."/>
            <person name="Wu S.-W."/>
            <person name="de Lencastre H."/>
        </authorList>
    </citation>
    <scope>NUCLEOTIDE SEQUENCE [GENOMIC DNA]</scope>
</reference>
<reference key="2">
    <citation type="journal article" date="2005" name="J. Bacteriol.">
        <title>Insights on evolution of virulence and resistance from the complete genome analysis of an early methicillin-resistant Staphylococcus aureus strain and a biofilm-producing methicillin-resistant Staphylococcus epidermidis strain.</title>
        <authorList>
            <person name="Gill S.R."/>
            <person name="Fouts D.E."/>
            <person name="Archer G.L."/>
            <person name="Mongodin E.F."/>
            <person name="DeBoy R.T."/>
            <person name="Ravel J."/>
            <person name="Paulsen I.T."/>
            <person name="Kolonay J.F."/>
            <person name="Brinkac L.M."/>
            <person name="Beanan M.J."/>
            <person name="Dodson R.J."/>
            <person name="Daugherty S.C."/>
            <person name="Madupu R."/>
            <person name="Angiuoli S.V."/>
            <person name="Durkin A.S."/>
            <person name="Haft D.H."/>
            <person name="Vamathevan J.J."/>
            <person name="Khouri H."/>
            <person name="Utterback T.R."/>
            <person name="Lee C."/>
            <person name="Dimitrov G."/>
            <person name="Jiang L."/>
            <person name="Qin H."/>
            <person name="Weidman J."/>
            <person name="Tran K."/>
            <person name="Kang K.H."/>
            <person name="Hance I.R."/>
            <person name="Nelson K.E."/>
            <person name="Fraser C.M."/>
        </authorList>
    </citation>
    <scope>NUCLEOTIDE SEQUENCE [LARGE SCALE GENOMIC DNA]</scope>
    <source>
        <strain>COL</strain>
    </source>
</reference>